<proteinExistence type="inferred from homology"/>
<dbReference type="EMBL" id="AAFI02000175">
    <property type="protein sequence ID" value="EAL61858.1"/>
    <property type="molecule type" value="Genomic_DNA"/>
</dbReference>
<dbReference type="RefSeq" id="XP_635360.1">
    <property type="nucleotide sequence ID" value="XM_630268.1"/>
</dbReference>
<dbReference type="SMR" id="Q54F30"/>
<dbReference type="FunCoup" id="Q54F30">
    <property type="interactions" value="114"/>
</dbReference>
<dbReference type="STRING" id="44689.Q54F30"/>
<dbReference type="PaxDb" id="44689-DDB0266484"/>
<dbReference type="EnsemblProtists" id="EAL61858">
    <property type="protein sequence ID" value="EAL61858"/>
    <property type="gene ID" value="DDB_G0291149"/>
</dbReference>
<dbReference type="GeneID" id="8628008"/>
<dbReference type="KEGG" id="ddi:DDB_G0291149"/>
<dbReference type="dictyBase" id="DDB_G0291149"/>
<dbReference type="VEuPathDB" id="AmoebaDB:DDB_G0291149"/>
<dbReference type="eggNOG" id="KOG2439">
    <property type="taxonomic scope" value="Eukaryota"/>
</dbReference>
<dbReference type="HOGENOM" id="CLU_018240_0_0_1"/>
<dbReference type="InParanoid" id="Q54F30"/>
<dbReference type="OMA" id="GYLHHVL"/>
<dbReference type="PhylomeDB" id="Q54F30"/>
<dbReference type="PRO" id="PR:Q54F30"/>
<dbReference type="Proteomes" id="UP000002195">
    <property type="component" value="Chromosome 5"/>
</dbReference>
<dbReference type="GO" id="GO:0097361">
    <property type="term" value="C:cytosolic [4Fe-4S] assembly targeting complex"/>
    <property type="evidence" value="ECO:0000318"/>
    <property type="project" value="GO_Central"/>
</dbReference>
<dbReference type="GO" id="GO:0051539">
    <property type="term" value="F:4 iron, 4 sulfur cluster binding"/>
    <property type="evidence" value="ECO:0007669"/>
    <property type="project" value="UniProtKB-KW"/>
</dbReference>
<dbReference type="GO" id="GO:0046872">
    <property type="term" value="F:metal ion binding"/>
    <property type="evidence" value="ECO:0007669"/>
    <property type="project" value="UniProtKB-KW"/>
</dbReference>
<dbReference type="Gene3D" id="3.40.50.1780">
    <property type="match status" value="1"/>
</dbReference>
<dbReference type="Gene3D" id="3.40.950.10">
    <property type="entry name" value="Fe-only Hydrogenase (Larger Subunit), Chain L, domain 3"/>
    <property type="match status" value="1"/>
</dbReference>
<dbReference type="InterPro" id="IPR050340">
    <property type="entry name" value="Cytosolic_Fe-S_CAF"/>
</dbReference>
<dbReference type="InterPro" id="IPR009016">
    <property type="entry name" value="Fe_hydrogenase"/>
</dbReference>
<dbReference type="InterPro" id="IPR004108">
    <property type="entry name" value="Fe_hydrogenase_lsu_C"/>
</dbReference>
<dbReference type="InterPro" id="IPR003149">
    <property type="entry name" value="Fe_hydrogenase_ssu"/>
</dbReference>
<dbReference type="PANTHER" id="PTHR11615">
    <property type="entry name" value="NITRATE, FORMATE, IRON DEHYDROGENASE"/>
    <property type="match status" value="1"/>
</dbReference>
<dbReference type="Pfam" id="PF02906">
    <property type="entry name" value="Fe_hyd_lg_C"/>
    <property type="match status" value="2"/>
</dbReference>
<dbReference type="Pfam" id="PF02256">
    <property type="entry name" value="Fe_hyd_SSU"/>
    <property type="match status" value="1"/>
</dbReference>
<dbReference type="SMART" id="SM00902">
    <property type="entry name" value="Fe_hyd_SSU"/>
    <property type="match status" value="1"/>
</dbReference>
<dbReference type="SUPFAM" id="SSF53920">
    <property type="entry name" value="Fe-only hydrogenase"/>
    <property type="match status" value="1"/>
</dbReference>
<protein>
    <recommendedName>
        <fullName>Probable cytosolic Fe-S cluster assembly factor narfl</fullName>
    </recommendedName>
</protein>
<reference key="1">
    <citation type="journal article" date="2005" name="Nature">
        <title>The genome of the social amoeba Dictyostelium discoideum.</title>
        <authorList>
            <person name="Eichinger L."/>
            <person name="Pachebat J.A."/>
            <person name="Gloeckner G."/>
            <person name="Rajandream M.A."/>
            <person name="Sucgang R."/>
            <person name="Berriman M."/>
            <person name="Song J."/>
            <person name="Olsen R."/>
            <person name="Szafranski K."/>
            <person name="Xu Q."/>
            <person name="Tunggal B."/>
            <person name="Kummerfeld S."/>
            <person name="Madera M."/>
            <person name="Konfortov B.A."/>
            <person name="Rivero F."/>
            <person name="Bankier A.T."/>
            <person name="Lehmann R."/>
            <person name="Hamlin N."/>
            <person name="Davies R."/>
            <person name="Gaudet P."/>
            <person name="Fey P."/>
            <person name="Pilcher K."/>
            <person name="Chen G."/>
            <person name="Saunders D."/>
            <person name="Sodergren E.J."/>
            <person name="Davis P."/>
            <person name="Kerhornou A."/>
            <person name="Nie X."/>
            <person name="Hall N."/>
            <person name="Anjard C."/>
            <person name="Hemphill L."/>
            <person name="Bason N."/>
            <person name="Farbrother P."/>
            <person name="Desany B."/>
            <person name="Just E."/>
            <person name="Morio T."/>
            <person name="Rost R."/>
            <person name="Churcher C.M."/>
            <person name="Cooper J."/>
            <person name="Haydock S."/>
            <person name="van Driessche N."/>
            <person name="Cronin A."/>
            <person name="Goodhead I."/>
            <person name="Muzny D.M."/>
            <person name="Mourier T."/>
            <person name="Pain A."/>
            <person name="Lu M."/>
            <person name="Harper D."/>
            <person name="Lindsay R."/>
            <person name="Hauser H."/>
            <person name="James K.D."/>
            <person name="Quiles M."/>
            <person name="Madan Babu M."/>
            <person name="Saito T."/>
            <person name="Buchrieser C."/>
            <person name="Wardroper A."/>
            <person name="Felder M."/>
            <person name="Thangavelu M."/>
            <person name="Johnson D."/>
            <person name="Knights A."/>
            <person name="Loulseged H."/>
            <person name="Mungall K.L."/>
            <person name="Oliver K."/>
            <person name="Price C."/>
            <person name="Quail M.A."/>
            <person name="Urushihara H."/>
            <person name="Hernandez J."/>
            <person name="Rabbinowitsch E."/>
            <person name="Steffen D."/>
            <person name="Sanders M."/>
            <person name="Ma J."/>
            <person name="Kohara Y."/>
            <person name="Sharp S."/>
            <person name="Simmonds M.N."/>
            <person name="Spiegler S."/>
            <person name="Tivey A."/>
            <person name="Sugano S."/>
            <person name="White B."/>
            <person name="Walker D."/>
            <person name="Woodward J.R."/>
            <person name="Winckler T."/>
            <person name="Tanaka Y."/>
            <person name="Shaulsky G."/>
            <person name="Schleicher M."/>
            <person name="Weinstock G.M."/>
            <person name="Rosenthal A."/>
            <person name="Cox E.C."/>
            <person name="Chisholm R.L."/>
            <person name="Gibbs R.A."/>
            <person name="Loomis W.F."/>
            <person name="Platzer M."/>
            <person name="Kay R.R."/>
            <person name="Williams J.G."/>
            <person name="Dear P.H."/>
            <person name="Noegel A.A."/>
            <person name="Barrell B.G."/>
            <person name="Kuspa A."/>
        </authorList>
    </citation>
    <scope>NUCLEOTIDE SEQUENCE [LARGE SCALE GENOMIC DNA]</scope>
    <source>
        <strain>AX4</strain>
    </source>
</reference>
<feature type="chain" id="PRO_0000328024" description="Probable cytosolic Fe-S cluster assembly factor narfl">
    <location>
        <begin position="1"/>
        <end position="522"/>
    </location>
</feature>
<feature type="binding site" evidence="2">
    <location>
        <position position="26"/>
    </location>
    <ligand>
        <name>[4Fe-4S] cluster</name>
        <dbReference type="ChEBI" id="CHEBI:49883"/>
        <label>1</label>
    </ligand>
</feature>
<feature type="binding site" evidence="2">
    <location>
        <position position="73"/>
    </location>
    <ligand>
        <name>[4Fe-4S] cluster</name>
        <dbReference type="ChEBI" id="CHEBI:49883"/>
        <label>1</label>
    </ligand>
</feature>
<feature type="binding site" evidence="2">
    <location>
        <position position="76"/>
    </location>
    <ligand>
        <name>[4Fe-4S] cluster</name>
        <dbReference type="ChEBI" id="CHEBI:49883"/>
        <label>1</label>
    </ligand>
</feature>
<feature type="binding site" evidence="2">
    <location>
        <position position="79"/>
    </location>
    <ligand>
        <name>[4Fe-4S] cluster</name>
        <dbReference type="ChEBI" id="CHEBI:49883"/>
        <label>1</label>
    </ligand>
</feature>
<feature type="binding site" evidence="2">
    <location>
        <position position="205"/>
    </location>
    <ligand>
        <name>[4Fe-4S] cluster</name>
        <dbReference type="ChEBI" id="CHEBI:49883"/>
        <label>2</label>
    </ligand>
</feature>
<feature type="binding site" evidence="2">
    <location>
        <position position="281"/>
    </location>
    <ligand>
        <name>[4Fe-4S] cluster</name>
        <dbReference type="ChEBI" id="CHEBI:49883"/>
        <label>2</label>
    </ligand>
</feature>
<feature type="binding site" evidence="2">
    <location>
        <position position="439"/>
    </location>
    <ligand>
        <name>[4Fe-4S] cluster</name>
        <dbReference type="ChEBI" id="CHEBI:49883"/>
        <label>2</label>
    </ligand>
</feature>
<feature type="binding site" evidence="2">
    <location>
        <position position="443"/>
    </location>
    <ligand>
        <name>[4Fe-4S] cluster</name>
        <dbReference type="ChEBI" id="CHEBI:49883"/>
        <label>2</label>
    </ligand>
</feature>
<keyword id="KW-0004">4Fe-4S</keyword>
<keyword id="KW-0408">Iron</keyword>
<keyword id="KW-0411">Iron-sulfur</keyword>
<keyword id="KW-0479">Metal-binding</keyword>
<keyword id="KW-1185">Reference proteome</keyword>
<gene>
    <name type="primary">narfl</name>
    <name type="ORF">DDB_G0291149</name>
</gene>
<accession>Q54F30</accession>
<organism>
    <name type="scientific">Dictyostelium discoideum</name>
    <name type="common">Social amoeba</name>
    <dbReference type="NCBI Taxonomy" id="44689"/>
    <lineage>
        <taxon>Eukaryota</taxon>
        <taxon>Amoebozoa</taxon>
        <taxon>Evosea</taxon>
        <taxon>Eumycetozoa</taxon>
        <taxon>Dictyostelia</taxon>
        <taxon>Dictyosteliales</taxon>
        <taxon>Dictyosteliaceae</taxon>
        <taxon>Dictyostelium</taxon>
    </lineage>
</organism>
<name>NARF_DICDI</name>
<sequence>MSKGEDKFSSVLKLTEFDYIVPSQICIKPVEIEKSNDSGNSKIQIESDGRYVEISEDGTKKSLEKATITLNDCLACSGCITSAESVLITAQSISEFLLNVNNNNDSNNNQDEKKTIVITLSPQSRASLASHFKISTLSVVKKLKTFFKKLNINYLFDSSFSRDFSLLESAAEFVARYKKTYINNNNDEETGKLEPFPLPMLSSACPGWICYAEKTHGEFILPFISTTKSPQQIMGTLVKYYFTEKILDNNTNNNNNNNNNNNNNNSKIKPSNIYHVTIMPCYDKKLEASRNDFYNDIFKTKDVDCVLSTTEILDLFKEKEIDFLSLEEDNSIEEQFFQLSPSNQFYSINGSSGGYLEFIYKYAAKELFNVDIVEPIQYKIGRNQDFKEVSLEIDGKKVLNFAQAYGFRNIQNIVRKIKTNITTKKDTNSQYDFVEIMACPSGCINGGGQIKSDAIKENKAILLDSEEKYNENVIFRQPIDNQSVQNIYNTWLNGCFSTDSKTNLHTQYHRIEKTTNALNIKW</sequence>
<comment type="function">
    <text evidence="1">Component of the cytosolic iron-sulfur (Fe/S) protein assembly machinery. Required for maturation of extramitochondrial Fe/S proteins (By similarity).</text>
</comment>
<comment type="similarity">
    <text evidence="3">Belongs to the NARF family.</text>
</comment>
<evidence type="ECO:0000250" key="1"/>
<evidence type="ECO:0000255" key="2"/>
<evidence type="ECO:0000305" key="3"/>